<sequence length="139" mass="15064">MAMTYHLDVVSAEQQMFSGLVEKIQVTGSEGELGIYPGHAPLLTAIKPGMIRIVKQHGHEEFIYLSGGILEVQPGSVTVLADTAIRGQDLDEARALEAKRKAEEHIKSSHGDVDYAQASAELAKAIAKLRVIELTKKAM</sequence>
<accession>Q5PKX3</accession>
<keyword id="KW-0066">ATP synthesis</keyword>
<keyword id="KW-0997">Cell inner membrane</keyword>
<keyword id="KW-1003">Cell membrane</keyword>
<keyword id="KW-0139">CF(1)</keyword>
<keyword id="KW-0375">Hydrogen ion transport</keyword>
<keyword id="KW-0406">Ion transport</keyword>
<keyword id="KW-0472">Membrane</keyword>
<keyword id="KW-0813">Transport</keyword>
<reference key="1">
    <citation type="journal article" date="2004" name="Nat. Genet.">
        <title>Comparison of genome degradation in Paratyphi A and Typhi, human-restricted serovars of Salmonella enterica that cause typhoid.</title>
        <authorList>
            <person name="McClelland M."/>
            <person name="Sanderson K.E."/>
            <person name="Clifton S.W."/>
            <person name="Latreille P."/>
            <person name="Porwollik S."/>
            <person name="Sabo A."/>
            <person name="Meyer R."/>
            <person name="Bieri T."/>
            <person name="Ozersky P."/>
            <person name="McLellan M."/>
            <person name="Harkins C.R."/>
            <person name="Wang C."/>
            <person name="Nguyen C."/>
            <person name="Berghoff A."/>
            <person name="Elliott G."/>
            <person name="Kohlberg S."/>
            <person name="Strong C."/>
            <person name="Du F."/>
            <person name="Carter J."/>
            <person name="Kremizki C."/>
            <person name="Layman D."/>
            <person name="Leonard S."/>
            <person name="Sun H."/>
            <person name="Fulton L."/>
            <person name="Nash W."/>
            <person name="Miner T."/>
            <person name="Minx P."/>
            <person name="Delehaunty K."/>
            <person name="Fronick C."/>
            <person name="Magrini V."/>
            <person name="Nhan M."/>
            <person name="Warren W."/>
            <person name="Florea L."/>
            <person name="Spieth J."/>
            <person name="Wilson R.K."/>
        </authorList>
    </citation>
    <scope>NUCLEOTIDE SEQUENCE [LARGE SCALE GENOMIC DNA]</scope>
    <source>
        <strain>ATCC 9150 / SARB42</strain>
    </source>
</reference>
<organism>
    <name type="scientific">Salmonella paratyphi A (strain ATCC 9150 / SARB42)</name>
    <dbReference type="NCBI Taxonomy" id="295319"/>
    <lineage>
        <taxon>Bacteria</taxon>
        <taxon>Pseudomonadati</taxon>
        <taxon>Pseudomonadota</taxon>
        <taxon>Gammaproteobacteria</taxon>
        <taxon>Enterobacterales</taxon>
        <taxon>Enterobacteriaceae</taxon>
        <taxon>Salmonella</taxon>
    </lineage>
</organism>
<proteinExistence type="inferred from homology"/>
<dbReference type="EMBL" id="CP000026">
    <property type="protein sequence ID" value="AAV79495.1"/>
    <property type="molecule type" value="Genomic_DNA"/>
</dbReference>
<dbReference type="RefSeq" id="WP_001251971.1">
    <property type="nucleotide sequence ID" value="NC_006511.1"/>
</dbReference>
<dbReference type="SMR" id="Q5PKX3"/>
<dbReference type="KEGG" id="spt:SPA3703"/>
<dbReference type="HOGENOM" id="CLU_084338_2_0_6"/>
<dbReference type="Proteomes" id="UP000008185">
    <property type="component" value="Chromosome"/>
</dbReference>
<dbReference type="GO" id="GO:0005886">
    <property type="term" value="C:plasma membrane"/>
    <property type="evidence" value="ECO:0007669"/>
    <property type="project" value="UniProtKB-SubCell"/>
</dbReference>
<dbReference type="GO" id="GO:0045259">
    <property type="term" value="C:proton-transporting ATP synthase complex"/>
    <property type="evidence" value="ECO:0007669"/>
    <property type="project" value="UniProtKB-KW"/>
</dbReference>
<dbReference type="GO" id="GO:0005524">
    <property type="term" value="F:ATP binding"/>
    <property type="evidence" value="ECO:0007669"/>
    <property type="project" value="UniProtKB-UniRule"/>
</dbReference>
<dbReference type="GO" id="GO:0046933">
    <property type="term" value="F:proton-transporting ATP synthase activity, rotational mechanism"/>
    <property type="evidence" value="ECO:0007669"/>
    <property type="project" value="UniProtKB-UniRule"/>
</dbReference>
<dbReference type="CDD" id="cd12152">
    <property type="entry name" value="F1-ATPase_delta"/>
    <property type="match status" value="1"/>
</dbReference>
<dbReference type="FunFam" id="1.20.5.440:FF:000001">
    <property type="entry name" value="ATP synthase epsilon chain"/>
    <property type="match status" value="1"/>
</dbReference>
<dbReference type="FunFam" id="2.60.15.10:FF:000001">
    <property type="entry name" value="ATP synthase epsilon chain"/>
    <property type="match status" value="1"/>
</dbReference>
<dbReference type="Gene3D" id="1.20.5.440">
    <property type="entry name" value="ATP synthase delta/epsilon subunit, C-terminal domain"/>
    <property type="match status" value="1"/>
</dbReference>
<dbReference type="Gene3D" id="2.60.15.10">
    <property type="entry name" value="F0F1 ATP synthase delta/epsilon subunit, N-terminal"/>
    <property type="match status" value="1"/>
</dbReference>
<dbReference type="HAMAP" id="MF_00530">
    <property type="entry name" value="ATP_synth_epsil_bac"/>
    <property type="match status" value="1"/>
</dbReference>
<dbReference type="InterPro" id="IPR036794">
    <property type="entry name" value="ATP_F1_dsu/esu_C_sf"/>
</dbReference>
<dbReference type="InterPro" id="IPR001469">
    <property type="entry name" value="ATP_synth_F1_dsu/esu"/>
</dbReference>
<dbReference type="InterPro" id="IPR020546">
    <property type="entry name" value="ATP_synth_F1_dsu/esu_N"/>
</dbReference>
<dbReference type="InterPro" id="IPR020547">
    <property type="entry name" value="ATP_synth_F1_esu_C"/>
</dbReference>
<dbReference type="InterPro" id="IPR036771">
    <property type="entry name" value="ATPsynth_dsu/esu_N"/>
</dbReference>
<dbReference type="NCBIfam" id="TIGR01216">
    <property type="entry name" value="ATP_synt_epsi"/>
    <property type="match status" value="1"/>
</dbReference>
<dbReference type="NCBIfam" id="NF001847">
    <property type="entry name" value="PRK00571.1-4"/>
    <property type="match status" value="1"/>
</dbReference>
<dbReference type="PANTHER" id="PTHR13822">
    <property type="entry name" value="ATP SYNTHASE DELTA/EPSILON CHAIN"/>
    <property type="match status" value="1"/>
</dbReference>
<dbReference type="PANTHER" id="PTHR13822:SF10">
    <property type="entry name" value="ATP SYNTHASE EPSILON CHAIN, CHLOROPLASTIC"/>
    <property type="match status" value="1"/>
</dbReference>
<dbReference type="Pfam" id="PF00401">
    <property type="entry name" value="ATP-synt_DE"/>
    <property type="match status" value="1"/>
</dbReference>
<dbReference type="Pfam" id="PF02823">
    <property type="entry name" value="ATP-synt_DE_N"/>
    <property type="match status" value="1"/>
</dbReference>
<dbReference type="SUPFAM" id="SSF46604">
    <property type="entry name" value="Epsilon subunit of F1F0-ATP synthase C-terminal domain"/>
    <property type="match status" value="1"/>
</dbReference>
<dbReference type="SUPFAM" id="SSF51344">
    <property type="entry name" value="Epsilon subunit of F1F0-ATP synthase N-terminal domain"/>
    <property type="match status" value="1"/>
</dbReference>
<feature type="chain" id="PRO_0000265887" description="ATP synthase epsilon chain">
    <location>
        <begin position="1"/>
        <end position="139"/>
    </location>
</feature>
<protein>
    <recommendedName>
        <fullName evidence="1">ATP synthase epsilon chain</fullName>
    </recommendedName>
    <alternativeName>
        <fullName evidence="1">ATP synthase F1 sector epsilon subunit</fullName>
    </alternativeName>
    <alternativeName>
        <fullName evidence="1">F-ATPase epsilon subunit</fullName>
    </alternativeName>
</protein>
<comment type="function">
    <text evidence="1">Produces ATP from ADP in the presence of a proton gradient across the membrane.</text>
</comment>
<comment type="subunit">
    <text>F-type ATPases have 2 components, CF(1) - the catalytic core - and CF(0) - the membrane proton channel. CF(1) has five subunits: alpha(3), beta(3), gamma(1), delta(1), epsilon(1). CF(0) has three main subunits: a, b and c.</text>
</comment>
<comment type="subcellular location">
    <subcellularLocation>
        <location evidence="1">Cell inner membrane</location>
        <topology evidence="1">Peripheral membrane protein</topology>
    </subcellularLocation>
</comment>
<comment type="similarity">
    <text evidence="1">Belongs to the ATPase epsilon chain family.</text>
</comment>
<evidence type="ECO:0000255" key="1">
    <source>
        <dbReference type="HAMAP-Rule" id="MF_00530"/>
    </source>
</evidence>
<name>ATPE_SALPA</name>
<gene>
    <name evidence="1" type="primary">atpC</name>
    <name type="ordered locus">SPA3703</name>
</gene>